<evidence type="ECO:0000269" key="1">
    <source>
    </source>
</evidence>
<evidence type="ECO:0000305" key="2"/>
<evidence type="ECO:0000305" key="3">
    <source>
    </source>
</evidence>
<comment type="function">
    <text evidence="1">Has nicotinamidemononucleotide (NMN) aminohydrolase activity, not active on other substrates.</text>
</comment>
<comment type="catalytic activity">
    <reaction evidence="1">
        <text>beta-nicotinamide D-ribonucleotide + H2O = nicotinate beta-D-ribonucleotide + NH4(+)</text>
        <dbReference type="Rhea" id="RHEA:12400"/>
        <dbReference type="ChEBI" id="CHEBI:14649"/>
        <dbReference type="ChEBI" id="CHEBI:15377"/>
        <dbReference type="ChEBI" id="CHEBI:28938"/>
        <dbReference type="ChEBI" id="CHEBI:57502"/>
        <dbReference type="EC" id="3.5.1.42"/>
    </reaction>
</comment>
<comment type="biophysicochemical properties">
    <kinetics>
        <KM evidence="1">6 uM for NMN</KM>
        <text>kcat is 3.3 sec(-1).</text>
    </kinetics>
    <phDependence>
        <text evidence="1">Optimum pH active over a broad range of pH values.</text>
    </phDependence>
</comment>
<comment type="subunit">
    <text evidence="3">Homodimer.</text>
</comment>
<comment type="similarity">
    <text evidence="2">Belongs to the CinA family. PncC subfamily.</text>
</comment>
<proteinExistence type="evidence at protein level"/>
<sequence>MTDSELMQLSEQVGQALKARGATVTTAESCTGGWVAKVITDIAGSSAWFERGFVTYSNEAKAQMIGVREETLAQHGAVSEPVVVEMAIGALKAARADYAVSISGIAGPDGGSEEKPVGTVWFAFATARGEGITRRECFSGDRDAVRRQATAYALQTLWQQFLQNT</sequence>
<gene>
    <name type="primary">pncC</name>
    <name type="synonym">ygaD</name>
    <name type="ordered locus">b2700</name>
    <name type="ordered locus">JW2670</name>
</gene>
<reference key="1">
    <citation type="journal article" date="1995" name="Mol. Microbiol.">
        <title>Cloning and expression of a murein hydrolase lipoprotein from Escherichia coli.</title>
        <authorList>
            <person name="Ehlert K."/>
            <person name="Hoeltje J.-V."/>
            <person name="Templin M.F."/>
        </authorList>
    </citation>
    <scope>NUCLEOTIDE SEQUENCE [GENOMIC DNA]</scope>
    <source>
        <strain>K12</strain>
    </source>
</reference>
<reference key="2">
    <citation type="journal article" date="1997" name="DNA Res.">
        <title>Construction of a contiguous 874-kb sequence of the Escherichia coli-K12 genome corresponding to 50.0-68.8 min on the linkage map and analysis of its sequence features.</title>
        <authorList>
            <person name="Yamamoto Y."/>
            <person name="Aiba H."/>
            <person name="Baba T."/>
            <person name="Hayashi K."/>
            <person name="Inada T."/>
            <person name="Isono K."/>
            <person name="Itoh T."/>
            <person name="Kimura S."/>
            <person name="Kitagawa M."/>
            <person name="Makino K."/>
            <person name="Miki T."/>
            <person name="Mitsuhashi N."/>
            <person name="Mizobuchi K."/>
            <person name="Mori H."/>
            <person name="Nakade S."/>
            <person name="Nakamura Y."/>
            <person name="Nashimoto H."/>
            <person name="Oshima T."/>
            <person name="Oyama S."/>
            <person name="Saito N."/>
            <person name="Sampei G."/>
            <person name="Satoh Y."/>
            <person name="Sivasundaram S."/>
            <person name="Tagami H."/>
            <person name="Takahashi H."/>
            <person name="Takeda J."/>
            <person name="Takemoto K."/>
            <person name="Uehara K."/>
            <person name="Wada C."/>
            <person name="Yamagata S."/>
            <person name="Horiuchi T."/>
        </authorList>
    </citation>
    <scope>NUCLEOTIDE SEQUENCE [LARGE SCALE GENOMIC DNA]</scope>
    <source>
        <strain>K12 / W3110 / ATCC 27325 / DSM 5911</strain>
    </source>
</reference>
<reference key="3">
    <citation type="journal article" date="1997" name="Science">
        <title>The complete genome sequence of Escherichia coli K-12.</title>
        <authorList>
            <person name="Blattner F.R."/>
            <person name="Plunkett G. III"/>
            <person name="Bloch C.A."/>
            <person name="Perna N.T."/>
            <person name="Burland V."/>
            <person name="Riley M."/>
            <person name="Collado-Vides J."/>
            <person name="Glasner J.D."/>
            <person name="Rode C.K."/>
            <person name="Mayhew G.F."/>
            <person name="Gregor J."/>
            <person name="Davis N.W."/>
            <person name="Kirkpatrick H.A."/>
            <person name="Goeden M.A."/>
            <person name="Rose D.J."/>
            <person name="Mau B."/>
            <person name="Shao Y."/>
        </authorList>
    </citation>
    <scope>NUCLEOTIDE SEQUENCE [LARGE SCALE GENOMIC DNA]</scope>
    <source>
        <strain>K12 / MG1655 / ATCC 47076</strain>
    </source>
</reference>
<reference key="4">
    <citation type="journal article" date="2006" name="Mol. Syst. Biol.">
        <title>Highly accurate genome sequences of Escherichia coli K-12 strains MG1655 and W3110.</title>
        <authorList>
            <person name="Hayashi K."/>
            <person name="Morooka N."/>
            <person name="Yamamoto Y."/>
            <person name="Fujita K."/>
            <person name="Isono K."/>
            <person name="Choi S."/>
            <person name="Ohtsubo E."/>
            <person name="Baba T."/>
            <person name="Wanner B.L."/>
            <person name="Mori H."/>
            <person name="Horiuchi T."/>
        </authorList>
    </citation>
    <scope>NUCLEOTIDE SEQUENCE [LARGE SCALE GENOMIC DNA]</scope>
    <source>
        <strain>K12 / W3110 / ATCC 27325 / DSM 5911</strain>
    </source>
</reference>
<reference key="5">
    <citation type="journal article" date="1980" name="Proc. Natl. Acad. Sci. U.S.A.">
        <title>Sequences of the recA gene and protein.</title>
        <authorList>
            <person name="Sancar A."/>
            <person name="Stachelek C."/>
            <person name="Konigsberg W."/>
            <person name="Rupp W.D."/>
        </authorList>
    </citation>
    <scope>PRELIMINARY NUCLEOTIDE SEQUENCE [GENOMIC DNA] OF 114-165</scope>
</reference>
<reference key="6">
    <citation type="journal article" date="1999" name="Electrophoresis">
        <title>Enrichment of low abundance proteins of Escherichia coli by hydroxyapatite chromatography.</title>
        <authorList>
            <person name="Fountoulakis M."/>
            <person name="Takacs M.-F."/>
            <person name="Berndt P."/>
            <person name="Langen H."/>
            <person name="Takacs B."/>
        </authorList>
    </citation>
    <scope>IDENTIFICATION BY MASS SPECTROMETRY</scope>
    <source>
        <strain>B / BL21</strain>
    </source>
</reference>
<reference key="7">
    <citation type="journal article" date="2011" name="J. Biol. Chem.">
        <title>Identification of nicotinamide mononucleotide deamidase of the bacterial pyridine nucleotide cycle reveals a novel broadly conserved amidohydrolase family.</title>
        <authorList>
            <person name="Galeazzi L."/>
            <person name="Bocci P."/>
            <person name="Amici A."/>
            <person name="Brunetti L."/>
            <person name="Ruggieri S."/>
            <person name="Romine M."/>
            <person name="Reed S."/>
            <person name="Osterman A.L."/>
            <person name="Rodionov D.A."/>
            <person name="Sorci L."/>
            <person name="Raffaelli N."/>
        </authorList>
    </citation>
    <scope>FUNCTION</scope>
    <scope>CATALYTIC ACTIVITY</scope>
    <scope>BIOPHYSICOCHEMICAL PROPERTIES</scope>
    <scope>SUBUNIT</scope>
    <source>
        <strain>K12</strain>
    </source>
</reference>
<keyword id="KW-0378">Hydrolase</keyword>
<keyword id="KW-0662">Pyridine nucleotide biosynthesis</keyword>
<keyword id="KW-1185">Reference proteome</keyword>
<protein>
    <recommendedName>
        <fullName>Nicotinamide-nucleotide amidohydrolase PncC</fullName>
        <shortName>NMN amidohydrolase PncC</shortName>
        <ecNumber>3.5.1.42</ecNumber>
    </recommendedName>
    <alternativeName>
        <fullName>NMN deamidase</fullName>
    </alternativeName>
    <alternativeName>
        <fullName>Nicotinamide-nucleotide amidase</fullName>
    </alternativeName>
</protein>
<name>PNCC_ECOLI</name>
<accession>P0A6G3</accession>
<accession>P41053</accession>
<organism>
    <name type="scientific">Escherichia coli (strain K12)</name>
    <dbReference type="NCBI Taxonomy" id="83333"/>
    <lineage>
        <taxon>Bacteria</taxon>
        <taxon>Pseudomonadati</taxon>
        <taxon>Pseudomonadota</taxon>
        <taxon>Gammaproteobacteria</taxon>
        <taxon>Enterobacterales</taxon>
        <taxon>Enterobacteriaceae</taxon>
        <taxon>Escherichia</taxon>
    </lineage>
</organism>
<feature type="chain" id="PRO_0000156790" description="Nicotinamide-nucleotide amidohydrolase PncC">
    <location>
        <begin position="1"/>
        <end position="165"/>
    </location>
</feature>
<dbReference type="EC" id="3.5.1.42"/>
<dbReference type="EMBL" id="U18785">
    <property type="protein sequence ID" value="AAB60061.1"/>
    <property type="molecule type" value="Genomic_DNA"/>
</dbReference>
<dbReference type="EMBL" id="U00096">
    <property type="protein sequence ID" value="AAC75742.1"/>
    <property type="molecule type" value="Genomic_DNA"/>
</dbReference>
<dbReference type="EMBL" id="AP009048">
    <property type="protein sequence ID" value="BAA16562.1"/>
    <property type="molecule type" value="Genomic_DNA"/>
</dbReference>
<dbReference type="EMBL" id="V00328">
    <property type="status" value="NOT_ANNOTATED_CDS"/>
    <property type="molecule type" value="Genomic_DNA"/>
</dbReference>
<dbReference type="PIR" id="H65049">
    <property type="entry name" value="H65049"/>
</dbReference>
<dbReference type="RefSeq" id="NP_417180.1">
    <property type="nucleotide sequence ID" value="NC_000913.3"/>
</dbReference>
<dbReference type="RefSeq" id="WP_000132231.1">
    <property type="nucleotide sequence ID" value="NZ_STEB01000027.1"/>
</dbReference>
<dbReference type="SMR" id="P0A6G3"/>
<dbReference type="BioGRID" id="4262070">
    <property type="interactions" value="145"/>
</dbReference>
<dbReference type="DIP" id="DIP-48189N"/>
<dbReference type="FunCoup" id="P0A6G3">
    <property type="interactions" value="80"/>
</dbReference>
<dbReference type="IntAct" id="P0A6G3">
    <property type="interactions" value="9"/>
</dbReference>
<dbReference type="STRING" id="511145.b2700"/>
<dbReference type="jPOST" id="P0A6G3"/>
<dbReference type="PaxDb" id="511145-b2700"/>
<dbReference type="EnsemblBacteria" id="AAC75742">
    <property type="protein sequence ID" value="AAC75742"/>
    <property type="gene ID" value="b2700"/>
</dbReference>
<dbReference type="GeneID" id="93779311"/>
<dbReference type="GeneID" id="947169"/>
<dbReference type="KEGG" id="ecj:JW2670"/>
<dbReference type="KEGG" id="eco:b2700"/>
<dbReference type="KEGG" id="ecoc:C3026_14865"/>
<dbReference type="PATRIC" id="fig|1411691.4.peg.4042"/>
<dbReference type="EchoBASE" id="EB2560"/>
<dbReference type="eggNOG" id="COG1546">
    <property type="taxonomic scope" value="Bacteria"/>
</dbReference>
<dbReference type="HOGENOM" id="CLU_030805_1_1_6"/>
<dbReference type="InParanoid" id="P0A6G3"/>
<dbReference type="OMA" id="FKFLNMD"/>
<dbReference type="OrthoDB" id="9801454at2"/>
<dbReference type="PhylomeDB" id="P0A6G3"/>
<dbReference type="BioCyc" id="EcoCyc:G7409-MONOMER"/>
<dbReference type="BioCyc" id="MetaCyc:G7409-MONOMER"/>
<dbReference type="PRO" id="PR:P0A6G3"/>
<dbReference type="Proteomes" id="UP000000625">
    <property type="component" value="Chromosome"/>
</dbReference>
<dbReference type="GO" id="GO:0019159">
    <property type="term" value="F:nicotinamide-nucleotide amidase activity"/>
    <property type="evidence" value="ECO:0000314"/>
    <property type="project" value="EcoCyc"/>
</dbReference>
<dbReference type="GO" id="GO:0019363">
    <property type="term" value="P:pyridine nucleotide biosynthetic process"/>
    <property type="evidence" value="ECO:0007669"/>
    <property type="project" value="UniProtKB-KW"/>
</dbReference>
<dbReference type="FunFam" id="3.90.950.20:FF:000001">
    <property type="entry name" value="Competence/damage-inducible domain protein CinA"/>
    <property type="match status" value="1"/>
</dbReference>
<dbReference type="Gene3D" id="3.90.950.20">
    <property type="entry name" value="CinA-like"/>
    <property type="match status" value="1"/>
</dbReference>
<dbReference type="InterPro" id="IPR036653">
    <property type="entry name" value="CinA-like_C"/>
</dbReference>
<dbReference type="InterPro" id="IPR008136">
    <property type="entry name" value="CinA_C"/>
</dbReference>
<dbReference type="NCBIfam" id="TIGR00199">
    <property type="entry name" value="PncC_domain"/>
    <property type="match status" value="1"/>
</dbReference>
<dbReference type="NCBIfam" id="NF002975">
    <property type="entry name" value="PRK03661.1"/>
    <property type="match status" value="1"/>
</dbReference>
<dbReference type="Pfam" id="PF02464">
    <property type="entry name" value="CinA"/>
    <property type="match status" value="1"/>
</dbReference>
<dbReference type="SUPFAM" id="SSF142433">
    <property type="entry name" value="CinA-like"/>
    <property type="match status" value="1"/>
</dbReference>